<accession>B4S6H5</accession>
<proteinExistence type="inferred from homology"/>
<sequence length="267" mass="28538">MAHNRITPLMNEQKKLLIAYYMPEYPVAGATLPVLEALQNSGADIIELGMPYSDPIGDGPVIQDAAQVAIRNGVHIGSLLDLVRKARAGEGCVKITVPIVLMGYCNPLIAYGGDCFLNDASEAGVDGLLIPDLPPEEAEDFLSRAKSFGLSVVFLISPVTQPERIRQIDALSTDFSYCLAVNATTGTGKLDEAERDADIESYLQRVSEHTRKKFVVGFGIRNRARVEKMCALADGAVVGTALLQAIAGAATPSQAASMAAGFWKTLR</sequence>
<name>TRPA_PROA2</name>
<reference key="1">
    <citation type="submission" date="2008-06" db="EMBL/GenBank/DDBJ databases">
        <title>Complete sequence of chromosome of Prosthecochloris aestuarii DSM 271.</title>
        <authorList>
            <consortium name="US DOE Joint Genome Institute"/>
            <person name="Lucas S."/>
            <person name="Copeland A."/>
            <person name="Lapidus A."/>
            <person name="Glavina del Rio T."/>
            <person name="Dalin E."/>
            <person name="Tice H."/>
            <person name="Bruce D."/>
            <person name="Goodwin L."/>
            <person name="Pitluck S."/>
            <person name="Schmutz J."/>
            <person name="Larimer F."/>
            <person name="Land M."/>
            <person name="Hauser L."/>
            <person name="Kyrpides N."/>
            <person name="Anderson I."/>
            <person name="Liu Z."/>
            <person name="Li T."/>
            <person name="Zhao F."/>
            <person name="Overmann J."/>
            <person name="Bryant D.A."/>
            <person name="Richardson P."/>
        </authorList>
    </citation>
    <scope>NUCLEOTIDE SEQUENCE [LARGE SCALE GENOMIC DNA]</scope>
    <source>
        <strain>DSM 271 / SK 413</strain>
    </source>
</reference>
<feature type="chain" id="PRO_1000095739" description="Tryptophan synthase alpha chain">
    <location>
        <begin position="1"/>
        <end position="267"/>
    </location>
</feature>
<feature type="active site" description="Proton acceptor" evidence="1">
    <location>
        <position position="47"/>
    </location>
</feature>
<feature type="active site" description="Proton acceptor" evidence="1">
    <location>
        <position position="58"/>
    </location>
</feature>
<comment type="function">
    <text evidence="1">The alpha subunit is responsible for the aldol cleavage of indoleglycerol phosphate to indole and glyceraldehyde 3-phosphate.</text>
</comment>
<comment type="catalytic activity">
    <reaction evidence="1">
        <text>(1S,2R)-1-C-(indol-3-yl)glycerol 3-phosphate + L-serine = D-glyceraldehyde 3-phosphate + L-tryptophan + H2O</text>
        <dbReference type="Rhea" id="RHEA:10532"/>
        <dbReference type="ChEBI" id="CHEBI:15377"/>
        <dbReference type="ChEBI" id="CHEBI:33384"/>
        <dbReference type="ChEBI" id="CHEBI:57912"/>
        <dbReference type="ChEBI" id="CHEBI:58866"/>
        <dbReference type="ChEBI" id="CHEBI:59776"/>
        <dbReference type="EC" id="4.2.1.20"/>
    </reaction>
</comment>
<comment type="pathway">
    <text evidence="1">Amino-acid biosynthesis; L-tryptophan biosynthesis; L-tryptophan from chorismate: step 5/5.</text>
</comment>
<comment type="subunit">
    <text evidence="1">Tetramer of two alpha and two beta chains.</text>
</comment>
<comment type="similarity">
    <text evidence="1">Belongs to the TrpA family.</text>
</comment>
<organism>
    <name type="scientific">Prosthecochloris aestuarii (strain DSM 271 / SK 413)</name>
    <dbReference type="NCBI Taxonomy" id="290512"/>
    <lineage>
        <taxon>Bacteria</taxon>
        <taxon>Pseudomonadati</taxon>
        <taxon>Chlorobiota</taxon>
        <taxon>Chlorobiia</taxon>
        <taxon>Chlorobiales</taxon>
        <taxon>Chlorobiaceae</taxon>
        <taxon>Prosthecochloris</taxon>
    </lineage>
</organism>
<keyword id="KW-0028">Amino-acid biosynthesis</keyword>
<keyword id="KW-0057">Aromatic amino acid biosynthesis</keyword>
<keyword id="KW-0456">Lyase</keyword>
<keyword id="KW-0822">Tryptophan biosynthesis</keyword>
<protein>
    <recommendedName>
        <fullName evidence="1">Tryptophan synthase alpha chain</fullName>
        <ecNumber evidence="1">4.2.1.20</ecNumber>
    </recommendedName>
</protein>
<dbReference type="EC" id="4.2.1.20" evidence="1"/>
<dbReference type="EMBL" id="CP001108">
    <property type="protein sequence ID" value="ACF45730.1"/>
    <property type="molecule type" value="Genomic_DNA"/>
</dbReference>
<dbReference type="RefSeq" id="WP_012505267.1">
    <property type="nucleotide sequence ID" value="NC_011059.1"/>
</dbReference>
<dbReference type="SMR" id="B4S6H5"/>
<dbReference type="STRING" id="290512.Paes_0683"/>
<dbReference type="KEGG" id="paa:Paes_0683"/>
<dbReference type="eggNOG" id="COG0159">
    <property type="taxonomic scope" value="Bacteria"/>
</dbReference>
<dbReference type="HOGENOM" id="CLU_016734_0_0_10"/>
<dbReference type="UniPathway" id="UPA00035">
    <property type="reaction ID" value="UER00044"/>
</dbReference>
<dbReference type="Proteomes" id="UP000002725">
    <property type="component" value="Chromosome"/>
</dbReference>
<dbReference type="GO" id="GO:0005829">
    <property type="term" value="C:cytosol"/>
    <property type="evidence" value="ECO:0007669"/>
    <property type="project" value="TreeGrafter"/>
</dbReference>
<dbReference type="GO" id="GO:0004834">
    <property type="term" value="F:tryptophan synthase activity"/>
    <property type="evidence" value="ECO:0007669"/>
    <property type="project" value="UniProtKB-UniRule"/>
</dbReference>
<dbReference type="CDD" id="cd04724">
    <property type="entry name" value="Tryptophan_synthase_alpha"/>
    <property type="match status" value="1"/>
</dbReference>
<dbReference type="Gene3D" id="3.20.20.70">
    <property type="entry name" value="Aldolase class I"/>
    <property type="match status" value="1"/>
</dbReference>
<dbReference type="HAMAP" id="MF_00131">
    <property type="entry name" value="Trp_synth_alpha"/>
    <property type="match status" value="1"/>
</dbReference>
<dbReference type="InterPro" id="IPR013785">
    <property type="entry name" value="Aldolase_TIM"/>
</dbReference>
<dbReference type="InterPro" id="IPR011060">
    <property type="entry name" value="RibuloseP-bd_barrel"/>
</dbReference>
<dbReference type="InterPro" id="IPR018204">
    <property type="entry name" value="Trp_synthase_alpha_AS"/>
</dbReference>
<dbReference type="InterPro" id="IPR002028">
    <property type="entry name" value="Trp_synthase_suA"/>
</dbReference>
<dbReference type="NCBIfam" id="TIGR00262">
    <property type="entry name" value="trpA"/>
    <property type="match status" value="1"/>
</dbReference>
<dbReference type="PANTHER" id="PTHR43406:SF1">
    <property type="entry name" value="TRYPTOPHAN SYNTHASE ALPHA CHAIN, CHLOROPLASTIC"/>
    <property type="match status" value="1"/>
</dbReference>
<dbReference type="PANTHER" id="PTHR43406">
    <property type="entry name" value="TRYPTOPHAN SYNTHASE, ALPHA CHAIN"/>
    <property type="match status" value="1"/>
</dbReference>
<dbReference type="Pfam" id="PF00290">
    <property type="entry name" value="Trp_syntA"/>
    <property type="match status" value="1"/>
</dbReference>
<dbReference type="SUPFAM" id="SSF51366">
    <property type="entry name" value="Ribulose-phoshate binding barrel"/>
    <property type="match status" value="1"/>
</dbReference>
<dbReference type="PROSITE" id="PS00167">
    <property type="entry name" value="TRP_SYNTHASE_ALPHA"/>
    <property type="match status" value="1"/>
</dbReference>
<gene>
    <name evidence="1" type="primary">trpA</name>
    <name type="ordered locus">Paes_0683</name>
</gene>
<evidence type="ECO:0000255" key="1">
    <source>
        <dbReference type="HAMAP-Rule" id="MF_00131"/>
    </source>
</evidence>